<evidence type="ECO:0000255" key="1">
    <source>
        <dbReference type="HAMAP-Rule" id="MF_03039"/>
    </source>
</evidence>
<sequence>MSLSKVKHIVLVLSGKGGVGKSSVTTQLALSLSQAGHSVGVLDVDLTGPSIPRMFGIEDAKVTQAPGGWLPITVHEADPSTGIGSLRVMSLGFLLPRRGDAVVWRGPKKTAMVRQFLSDVFWDELDYLLIDTPPGTSDEHISLAETLLQKAHPEQLAGAVVVTTPQAVATADVRKELNFCTKTGIRVLGVVENMSGFVCPNCSECTNIFMSGGGEVMAKDFNVRFLGRIPIDPQFLVLIETGKSPRYPEGTSVNGQDISSATQVAANGDETRDSRLLVYKYKSCSLAPIFGPITADIIADVTR</sequence>
<comment type="function">
    <text evidence="1">Component of the cytosolic iron-sulfur (Fe/S) protein assembly (CIA) machinery. Required for maturation of extramitochondrial Fe-S proteins. The NBP35-CFD1 heterotetramer forms a Fe-S scaffold complex, mediating the de novo assembly of an Fe-S cluster and its transfer to target apoproteins.</text>
</comment>
<comment type="cofactor">
    <cofactor evidence="1">
        <name>[4Fe-4S] cluster</name>
        <dbReference type="ChEBI" id="CHEBI:49883"/>
    </cofactor>
    <text evidence="1">Binds 4 [4Fe-4S] clusters per heterotetramer. Contains two stable clusters in the N-termini of NBP35 and two labile, bridging clusters between subunits of the NBP35-CFD1 heterotetramer.</text>
</comment>
<comment type="subunit">
    <text evidence="1">Heterotetramer of 2 NBP35 and 2 CFD1 chains.</text>
</comment>
<comment type="subcellular location">
    <subcellularLocation>
        <location evidence="1">Cytoplasm</location>
    </subcellularLocation>
</comment>
<comment type="similarity">
    <text evidence="1">Belongs to the Mrp/NBP35 ATP-binding proteins family. NUBP2/CFD1 subfamily.</text>
</comment>
<reference key="1">
    <citation type="journal article" date="2015" name="Genome Announc.">
        <title>Draft genome sequence of the cellulolytic fungus Chaetomium globosum.</title>
        <authorList>
            <person name="Cuomo C.A."/>
            <person name="Untereiner W.A."/>
            <person name="Ma L.-J."/>
            <person name="Grabherr M."/>
            <person name="Birren B.W."/>
        </authorList>
    </citation>
    <scope>NUCLEOTIDE SEQUENCE [LARGE SCALE GENOMIC DNA]</scope>
    <source>
        <strain>ATCC 6205 / CBS 148.51 / DSM 1962 / NBRC 6347 / NRRL 1970</strain>
    </source>
</reference>
<accession>Q2GWZ4</accession>
<protein>
    <recommendedName>
        <fullName evidence="1">Cytosolic Fe-S cluster assembly factor CFD1</fullName>
    </recommendedName>
    <alternativeName>
        <fullName evidence="1">Cytosolic Fe-S cluster-deficient protein 1</fullName>
    </alternativeName>
</protein>
<dbReference type="EMBL" id="CH408033">
    <property type="protein sequence ID" value="EAQ86257.1"/>
    <property type="molecule type" value="Genomic_DNA"/>
</dbReference>
<dbReference type="RefSeq" id="XP_001225166.1">
    <property type="nucleotide sequence ID" value="XM_001225165.1"/>
</dbReference>
<dbReference type="SMR" id="Q2GWZ4"/>
<dbReference type="FunCoup" id="Q2GWZ4">
    <property type="interactions" value="126"/>
</dbReference>
<dbReference type="STRING" id="306901.Q2GWZ4"/>
<dbReference type="GeneID" id="4394344"/>
<dbReference type="VEuPathDB" id="FungiDB:CHGG_07510"/>
<dbReference type="eggNOG" id="KOG3022">
    <property type="taxonomic scope" value="Eukaryota"/>
</dbReference>
<dbReference type="HOGENOM" id="CLU_024839_0_1_1"/>
<dbReference type="InParanoid" id="Q2GWZ4"/>
<dbReference type="OMA" id="WIPVFAD"/>
<dbReference type="OrthoDB" id="1741334at2759"/>
<dbReference type="Proteomes" id="UP000001056">
    <property type="component" value="Unassembled WGS sequence"/>
</dbReference>
<dbReference type="GO" id="GO:1904564">
    <property type="term" value="C:cytosolic [4Fe-4S] assembly scaffold complex"/>
    <property type="evidence" value="ECO:0007669"/>
    <property type="project" value="EnsemblFungi"/>
</dbReference>
<dbReference type="GO" id="GO:0051539">
    <property type="term" value="F:4 iron, 4 sulfur cluster binding"/>
    <property type="evidence" value="ECO:0007669"/>
    <property type="project" value="UniProtKB-UniRule"/>
</dbReference>
<dbReference type="GO" id="GO:0005524">
    <property type="term" value="F:ATP binding"/>
    <property type="evidence" value="ECO:0007669"/>
    <property type="project" value="UniProtKB-KW"/>
</dbReference>
<dbReference type="GO" id="GO:0016887">
    <property type="term" value="F:ATP hydrolysis activity"/>
    <property type="evidence" value="ECO:0007669"/>
    <property type="project" value="EnsemblFungi"/>
</dbReference>
<dbReference type="GO" id="GO:0140663">
    <property type="term" value="F:ATP-dependent FeS chaperone activity"/>
    <property type="evidence" value="ECO:0007669"/>
    <property type="project" value="InterPro"/>
</dbReference>
<dbReference type="GO" id="GO:0046872">
    <property type="term" value="F:metal ion binding"/>
    <property type="evidence" value="ECO:0007669"/>
    <property type="project" value="UniProtKB-KW"/>
</dbReference>
<dbReference type="GO" id="GO:0016226">
    <property type="term" value="P:iron-sulfur cluster assembly"/>
    <property type="evidence" value="ECO:0007669"/>
    <property type="project" value="UniProtKB-UniRule"/>
</dbReference>
<dbReference type="GO" id="GO:0002098">
    <property type="term" value="P:tRNA wobble uridine modification"/>
    <property type="evidence" value="ECO:0007669"/>
    <property type="project" value="EnsemblFungi"/>
</dbReference>
<dbReference type="CDD" id="cd02037">
    <property type="entry name" value="Mrp_NBP35"/>
    <property type="match status" value="1"/>
</dbReference>
<dbReference type="FunFam" id="3.40.50.300:FF:001300">
    <property type="entry name" value="Cytosolic Fe-S cluster assembly factor CFD1"/>
    <property type="match status" value="1"/>
</dbReference>
<dbReference type="Gene3D" id="3.40.50.300">
    <property type="entry name" value="P-loop containing nucleotide triphosphate hydrolases"/>
    <property type="match status" value="1"/>
</dbReference>
<dbReference type="HAMAP" id="MF_02040">
    <property type="entry name" value="Mrp_NBP35"/>
    <property type="match status" value="1"/>
</dbReference>
<dbReference type="HAMAP" id="MF_03039">
    <property type="entry name" value="NUBP2"/>
    <property type="match status" value="1"/>
</dbReference>
<dbReference type="InterPro" id="IPR000808">
    <property type="entry name" value="Mrp-like_CS"/>
</dbReference>
<dbReference type="InterPro" id="IPR019591">
    <property type="entry name" value="Mrp/NBP35_ATP-bd"/>
</dbReference>
<dbReference type="InterPro" id="IPR028600">
    <property type="entry name" value="NUBP2/Cfd1_eukaryotes"/>
</dbReference>
<dbReference type="InterPro" id="IPR027417">
    <property type="entry name" value="P-loop_NTPase"/>
</dbReference>
<dbReference type="InterPro" id="IPR033756">
    <property type="entry name" value="YlxH/NBP35"/>
</dbReference>
<dbReference type="PANTHER" id="PTHR23264:SF19">
    <property type="entry name" value="CYTOSOLIC FE-S CLUSTER ASSEMBLY FACTOR NUBP2"/>
    <property type="match status" value="1"/>
</dbReference>
<dbReference type="PANTHER" id="PTHR23264">
    <property type="entry name" value="NUCLEOTIDE-BINDING PROTEIN NBP35 YEAST -RELATED"/>
    <property type="match status" value="1"/>
</dbReference>
<dbReference type="Pfam" id="PF10609">
    <property type="entry name" value="ParA"/>
    <property type="match status" value="1"/>
</dbReference>
<dbReference type="SUPFAM" id="SSF52540">
    <property type="entry name" value="P-loop containing nucleoside triphosphate hydrolases"/>
    <property type="match status" value="1"/>
</dbReference>
<dbReference type="PROSITE" id="PS01215">
    <property type="entry name" value="MRP"/>
    <property type="match status" value="1"/>
</dbReference>
<name>CFD1_CHAGB</name>
<keyword id="KW-0004">4Fe-4S</keyword>
<keyword id="KW-0067">ATP-binding</keyword>
<keyword id="KW-0963">Cytoplasm</keyword>
<keyword id="KW-0408">Iron</keyword>
<keyword id="KW-0411">Iron-sulfur</keyword>
<keyword id="KW-0479">Metal-binding</keyword>
<keyword id="KW-0547">Nucleotide-binding</keyword>
<keyword id="KW-1185">Reference proteome</keyword>
<gene>
    <name evidence="1" type="primary">CFD1</name>
    <name type="ORF">CHGG_07510</name>
</gene>
<feature type="chain" id="PRO_0000278875" description="Cytosolic Fe-S cluster assembly factor CFD1">
    <location>
        <begin position="1"/>
        <end position="303"/>
    </location>
</feature>
<feature type="binding site" evidence="1">
    <location>
        <begin position="15"/>
        <end position="22"/>
    </location>
    <ligand>
        <name>ATP</name>
        <dbReference type="ChEBI" id="CHEBI:30616"/>
    </ligand>
</feature>
<feature type="binding site" evidence="1">
    <location>
        <position position="199"/>
    </location>
    <ligand>
        <name>[4Fe-4S] cluster</name>
        <dbReference type="ChEBI" id="CHEBI:49883"/>
        <note>ligand shared between dimeric partners</note>
    </ligand>
</feature>
<feature type="binding site" evidence="1">
    <location>
        <position position="202"/>
    </location>
    <ligand>
        <name>[4Fe-4S] cluster</name>
        <dbReference type="ChEBI" id="CHEBI:49883"/>
        <note>ligand shared between dimeric partners</note>
    </ligand>
</feature>
<proteinExistence type="inferred from homology"/>
<organism>
    <name type="scientific">Chaetomium globosum (strain ATCC 6205 / CBS 148.51 / DSM 1962 / NBRC 6347 / NRRL 1970)</name>
    <name type="common">Soil fungus</name>
    <dbReference type="NCBI Taxonomy" id="306901"/>
    <lineage>
        <taxon>Eukaryota</taxon>
        <taxon>Fungi</taxon>
        <taxon>Dikarya</taxon>
        <taxon>Ascomycota</taxon>
        <taxon>Pezizomycotina</taxon>
        <taxon>Sordariomycetes</taxon>
        <taxon>Sordariomycetidae</taxon>
        <taxon>Sordariales</taxon>
        <taxon>Chaetomiaceae</taxon>
        <taxon>Chaetomium</taxon>
    </lineage>
</organism>